<keyword id="KW-0320">Glycogen biosynthesis</keyword>
<keyword id="KW-0328">Glycosyltransferase</keyword>
<keyword id="KW-0808">Transferase</keyword>
<accession>B0BAQ4</accession>
<gene>
    <name evidence="1" type="primary">glgA</name>
    <name type="ordered locus">CTLon_0168</name>
</gene>
<evidence type="ECO:0000255" key="1">
    <source>
        <dbReference type="HAMAP-Rule" id="MF_00484"/>
    </source>
</evidence>
<name>GLGA_CHLTB</name>
<dbReference type="EC" id="2.4.1.21" evidence="1"/>
<dbReference type="EMBL" id="AM884177">
    <property type="protein sequence ID" value="CAP06566.1"/>
    <property type="molecule type" value="Genomic_DNA"/>
</dbReference>
<dbReference type="RefSeq" id="WP_009873413.1">
    <property type="nucleotide sequence ID" value="NC_010280.2"/>
</dbReference>
<dbReference type="SMR" id="B0BAQ4"/>
<dbReference type="CAZy" id="GT5">
    <property type="family name" value="Glycosyltransferase Family 5"/>
</dbReference>
<dbReference type="KEGG" id="ctl:CTLon_0168"/>
<dbReference type="HOGENOM" id="CLU_009583_18_3_0"/>
<dbReference type="UniPathway" id="UPA00164"/>
<dbReference type="Proteomes" id="UP001154401">
    <property type="component" value="Chromosome"/>
</dbReference>
<dbReference type="GO" id="GO:0009011">
    <property type="term" value="F:alpha-1,4-glucan glucosyltransferase (ADP-glucose donor) activity"/>
    <property type="evidence" value="ECO:0007669"/>
    <property type="project" value="UniProtKB-UniRule"/>
</dbReference>
<dbReference type="GO" id="GO:0004373">
    <property type="term" value="F:alpha-1,4-glucan glucosyltransferase (UDP-glucose donor) activity"/>
    <property type="evidence" value="ECO:0007669"/>
    <property type="project" value="InterPro"/>
</dbReference>
<dbReference type="GO" id="GO:0005978">
    <property type="term" value="P:glycogen biosynthetic process"/>
    <property type="evidence" value="ECO:0007669"/>
    <property type="project" value="UniProtKB-UniRule"/>
</dbReference>
<dbReference type="CDD" id="cd03791">
    <property type="entry name" value="GT5_Glycogen_synthase_DULL1-like"/>
    <property type="match status" value="1"/>
</dbReference>
<dbReference type="Gene3D" id="3.40.50.2000">
    <property type="entry name" value="Glycogen Phosphorylase B"/>
    <property type="match status" value="2"/>
</dbReference>
<dbReference type="HAMAP" id="MF_00484">
    <property type="entry name" value="Glycogen_synth"/>
    <property type="match status" value="1"/>
</dbReference>
<dbReference type="InterPro" id="IPR001296">
    <property type="entry name" value="Glyco_trans_1"/>
</dbReference>
<dbReference type="InterPro" id="IPR011835">
    <property type="entry name" value="GS/SS"/>
</dbReference>
<dbReference type="InterPro" id="IPR013534">
    <property type="entry name" value="Starch_synth_cat_dom"/>
</dbReference>
<dbReference type="NCBIfam" id="TIGR02095">
    <property type="entry name" value="glgA"/>
    <property type="match status" value="1"/>
</dbReference>
<dbReference type="NCBIfam" id="NF001904">
    <property type="entry name" value="PRK00654.2-3"/>
    <property type="match status" value="1"/>
</dbReference>
<dbReference type="PANTHER" id="PTHR46083">
    <property type="match status" value="1"/>
</dbReference>
<dbReference type="PANTHER" id="PTHR46083:SF1">
    <property type="entry name" value="GLYCOGEN SYNTHASE 2-RELATED"/>
    <property type="match status" value="1"/>
</dbReference>
<dbReference type="Pfam" id="PF08323">
    <property type="entry name" value="Glyco_transf_5"/>
    <property type="match status" value="1"/>
</dbReference>
<dbReference type="Pfam" id="PF00534">
    <property type="entry name" value="Glycos_transf_1"/>
    <property type="match status" value="1"/>
</dbReference>
<dbReference type="SUPFAM" id="SSF53756">
    <property type="entry name" value="UDP-Glycosyltransferase/glycogen phosphorylase"/>
    <property type="match status" value="1"/>
</dbReference>
<protein>
    <recommendedName>
        <fullName evidence="1">Glycogen synthase</fullName>
        <ecNumber evidence="1">2.4.1.21</ecNumber>
    </recommendedName>
    <alternativeName>
        <fullName evidence="1">Starch [bacterial glycogen] synthase</fullName>
    </alternativeName>
</protein>
<organism>
    <name type="scientific">Chlamydia trachomatis serovar L2b (strain UCH-1/proctitis)</name>
    <dbReference type="NCBI Taxonomy" id="471473"/>
    <lineage>
        <taxon>Bacteria</taxon>
        <taxon>Pseudomonadati</taxon>
        <taxon>Chlamydiota</taxon>
        <taxon>Chlamydiia</taxon>
        <taxon>Chlamydiales</taxon>
        <taxon>Chlamydiaceae</taxon>
        <taxon>Chlamydia/Chlamydophila group</taxon>
        <taxon>Chlamydia</taxon>
    </lineage>
</organism>
<comment type="function">
    <text evidence="1">Synthesizes alpha-1,4-glucan chains using ADP-glucose.</text>
</comment>
<comment type="catalytic activity">
    <reaction evidence="1">
        <text>[(1-&gt;4)-alpha-D-glucosyl](n) + ADP-alpha-D-glucose = [(1-&gt;4)-alpha-D-glucosyl](n+1) + ADP + H(+)</text>
        <dbReference type="Rhea" id="RHEA:18189"/>
        <dbReference type="Rhea" id="RHEA-COMP:9584"/>
        <dbReference type="Rhea" id="RHEA-COMP:9587"/>
        <dbReference type="ChEBI" id="CHEBI:15378"/>
        <dbReference type="ChEBI" id="CHEBI:15444"/>
        <dbReference type="ChEBI" id="CHEBI:57498"/>
        <dbReference type="ChEBI" id="CHEBI:456216"/>
        <dbReference type="EC" id="2.4.1.21"/>
    </reaction>
</comment>
<comment type="pathway">
    <text evidence="1">Glycan biosynthesis; glycogen biosynthesis.</text>
</comment>
<comment type="similarity">
    <text evidence="1">Belongs to the glycosyltransferase 1 family. Bacterial/plant glycogen synthase subfamily.</text>
</comment>
<feature type="chain" id="PRO_1000126060" description="Glycogen synthase">
    <location>
        <begin position="1"/>
        <end position="474"/>
    </location>
</feature>
<feature type="binding site" evidence="1">
    <location>
        <position position="15"/>
    </location>
    <ligand>
        <name>ADP-alpha-D-glucose</name>
        <dbReference type="ChEBI" id="CHEBI:57498"/>
    </ligand>
</feature>
<reference key="1">
    <citation type="journal article" date="2008" name="Genome Res.">
        <title>Chlamydia trachomatis: genome sequence analysis of lymphogranuloma venereum isolates.</title>
        <authorList>
            <person name="Thomson N.R."/>
            <person name="Holden M.T.G."/>
            <person name="Carder C."/>
            <person name="Lennard N."/>
            <person name="Lockey S.J."/>
            <person name="Marsh P."/>
            <person name="Skipp P."/>
            <person name="O'Connor C.D."/>
            <person name="Goodhead I."/>
            <person name="Norbertzcak H."/>
            <person name="Harris B."/>
            <person name="Ormond D."/>
            <person name="Rance R."/>
            <person name="Quail M.A."/>
            <person name="Parkhill J."/>
            <person name="Stephens R.S."/>
            <person name="Clarke I.N."/>
        </authorList>
    </citation>
    <scope>NUCLEOTIDE SEQUENCE [LARGE SCALE GENOMIC DNA]</scope>
    <source>
        <strain>UCH-1/proctitis</strain>
    </source>
</reference>
<proteinExistence type="inferred from homology"/>
<sequence length="474" mass="53394">MKIIHTAIEFAPVIKAGGLGDALYGLAKALAANHTTEVVIPLYPKLFTLPKEQDLCSIQKLSYFFAGEQEATAFSYFYEGIKVTLFKLDTQPELFENAETIYTSDDAFRFCAFSAAAASYIQKEGANIVHLHDWHTGLVAGLLKQQPCSQLQKIVLTLHNFGYRGYTTREILEASSLNEFYISQYQLFRDPQTCVLLKGALYCSDFVTTVSPTYAKEILEDYSDYEIHDAITARQHHLRGILNGIDTTIWGPETDPNLAKNYTKELFETPSIFFEAKAENKKALYERLGLSLEHSPCVCIISRIAEQKGPHFMKQAILHALENAYTLIIIGTCYGNQLHEEFANLQESLANSPNVRILLTYSDVLARQIFAAADMICIPSMFEPCGLTQMIGMRYGTVPLVRATGGLADTVANGINGFSFFNPHDFYEFRNMLLEAVTTYRTNHDKWQHIVRACLNFSSDLETAANKYLEIYKQ</sequence>